<evidence type="ECO:0000255" key="1">
    <source>
        <dbReference type="HAMAP-Rule" id="MF_00528"/>
    </source>
</evidence>
<dbReference type="EC" id="3.6.1.9" evidence="1"/>
<dbReference type="EMBL" id="CP000124">
    <property type="protein sequence ID" value="ABA47509.1"/>
    <property type="molecule type" value="Genomic_DNA"/>
</dbReference>
<dbReference type="RefSeq" id="WP_004185695.1">
    <property type="nucleotide sequence ID" value="NC_007434.1"/>
</dbReference>
<dbReference type="SMR" id="Q3JUG5"/>
<dbReference type="EnsemblBacteria" id="ABA47509">
    <property type="protein sequence ID" value="ABA47509"/>
    <property type="gene ID" value="BURPS1710b_1378"/>
</dbReference>
<dbReference type="KEGG" id="bpm:BURPS1710b_1378"/>
<dbReference type="HOGENOM" id="CLU_040416_2_1_4"/>
<dbReference type="Proteomes" id="UP000002700">
    <property type="component" value="Chromosome I"/>
</dbReference>
<dbReference type="GO" id="GO:0005737">
    <property type="term" value="C:cytoplasm"/>
    <property type="evidence" value="ECO:0007669"/>
    <property type="project" value="UniProtKB-SubCell"/>
</dbReference>
<dbReference type="GO" id="GO:0036218">
    <property type="term" value="F:dTTP diphosphatase activity"/>
    <property type="evidence" value="ECO:0007669"/>
    <property type="project" value="RHEA"/>
</dbReference>
<dbReference type="GO" id="GO:0036221">
    <property type="term" value="F:UTP diphosphatase activity"/>
    <property type="evidence" value="ECO:0007669"/>
    <property type="project" value="RHEA"/>
</dbReference>
<dbReference type="GO" id="GO:0009117">
    <property type="term" value="P:nucleotide metabolic process"/>
    <property type="evidence" value="ECO:0007669"/>
    <property type="project" value="UniProtKB-KW"/>
</dbReference>
<dbReference type="CDD" id="cd00555">
    <property type="entry name" value="Maf"/>
    <property type="match status" value="1"/>
</dbReference>
<dbReference type="Gene3D" id="3.90.950.10">
    <property type="match status" value="1"/>
</dbReference>
<dbReference type="HAMAP" id="MF_00528">
    <property type="entry name" value="Maf"/>
    <property type="match status" value="1"/>
</dbReference>
<dbReference type="InterPro" id="IPR029001">
    <property type="entry name" value="ITPase-like_fam"/>
</dbReference>
<dbReference type="InterPro" id="IPR003697">
    <property type="entry name" value="Maf-like"/>
</dbReference>
<dbReference type="NCBIfam" id="TIGR00172">
    <property type="entry name" value="maf"/>
    <property type="match status" value="1"/>
</dbReference>
<dbReference type="PANTHER" id="PTHR43213">
    <property type="entry name" value="BIFUNCTIONAL DTTP/UTP PYROPHOSPHATASE/METHYLTRANSFERASE PROTEIN-RELATED"/>
    <property type="match status" value="1"/>
</dbReference>
<dbReference type="PANTHER" id="PTHR43213:SF5">
    <property type="entry name" value="BIFUNCTIONAL DTTP_UTP PYROPHOSPHATASE_METHYLTRANSFERASE PROTEIN-RELATED"/>
    <property type="match status" value="1"/>
</dbReference>
<dbReference type="Pfam" id="PF02545">
    <property type="entry name" value="Maf"/>
    <property type="match status" value="1"/>
</dbReference>
<dbReference type="PIRSF" id="PIRSF006305">
    <property type="entry name" value="Maf"/>
    <property type="match status" value="1"/>
</dbReference>
<dbReference type="SUPFAM" id="SSF52972">
    <property type="entry name" value="ITPase-like"/>
    <property type="match status" value="1"/>
</dbReference>
<gene>
    <name type="ordered locus">BURPS1710b_1378</name>
</gene>
<sequence>MPEHAAPSYPFVYLASQSPRRRELLDQLGVRYELLAPAPDEDAEALEAELPGEAPDHYVLRVCVAKAQAARARLVARGLPAAPVLVADTTVTIDGAILGKPADAADALAMLARLAGRTHDVLTALAVIDATGELMPPALSRSAVRFAPAAREALARYVETGEPFGKAGAYAIQGRAAEFVERIDGSHSGIMGLPLFETAALLRAAHVAF</sequence>
<keyword id="KW-0963">Cytoplasm</keyword>
<keyword id="KW-0378">Hydrolase</keyword>
<keyword id="KW-0546">Nucleotide metabolism</keyword>
<proteinExistence type="inferred from homology"/>
<name>NTPPA_BURP1</name>
<accession>Q3JUG5</accession>
<protein>
    <recommendedName>
        <fullName evidence="1">dTTP/UTP pyrophosphatase</fullName>
        <shortName evidence="1">dTTPase/UTPase</shortName>
        <ecNumber evidence="1">3.6.1.9</ecNumber>
    </recommendedName>
    <alternativeName>
        <fullName evidence="1">Nucleoside triphosphate pyrophosphatase</fullName>
    </alternativeName>
    <alternativeName>
        <fullName evidence="1">Nucleotide pyrophosphatase</fullName>
        <shortName evidence="1">Nucleotide PPase</shortName>
    </alternativeName>
</protein>
<feature type="chain" id="PRO_0000267269" description="dTTP/UTP pyrophosphatase">
    <location>
        <begin position="1"/>
        <end position="209"/>
    </location>
</feature>
<feature type="active site" description="Proton acceptor" evidence="1">
    <location>
        <position position="88"/>
    </location>
</feature>
<feature type="site" description="Important for substrate specificity" evidence="1">
    <location>
        <position position="20"/>
    </location>
</feature>
<feature type="site" description="Important for substrate specificity" evidence="1">
    <location>
        <position position="89"/>
    </location>
</feature>
<feature type="site" description="Important for substrate specificity" evidence="1">
    <location>
        <position position="173"/>
    </location>
</feature>
<organism>
    <name type="scientific">Burkholderia pseudomallei (strain 1710b)</name>
    <dbReference type="NCBI Taxonomy" id="320372"/>
    <lineage>
        <taxon>Bacteria</taxon>
        <taxon>Pseudomonadati</taxon>
        <taxon>Pseudomonadota</taxon>
        <taxon>Betaproteobacteria</taxon>
        <taxon>Burkholderiales</taxon>
        <taxon>Burkholderiaceae</taxon>
        <taxon>Burkholderia</taxon>
        <taxon>pseudomallei group</taxon>
    </lineage>
</organism>
<comment type="function">
    <text evidence="1">Nucleoside triphosphate pyrophosphatase that hydrolyzes dTTP and UTP. May have a dual role in cell division arrest and in preventing the incorporation of modified nucleotides into cellular nucleic acids.</text>
</comment>
<comment type="catalytic activity">
    <reaction evidence="1">
        <text>dTTP + H2O = dTMP + diphosphate + H(+)</text>
        <dbReference type="Rhea" id="RHEA:28534"/>
        <dbReference type="ChEBI" id="CHEBI:15377"/>
        <dbReference type="ChEBI" id="CHEBI:15378"/>
        <dbReference type="ChEBI" id="CHEBI:33019"/>
        <dbReference type="ChEBI" id="CHEBI:37568"/>
        <dbReference type="ChEBI" id="CHEBI:63528"/>
        <dbReference type="EC" id="3.6.1.9"/>
    </reaction>
</comment>
<comment type="catalytic activity">
    <reaction evidence="1">
        <text>UTP + H2O = UMP + diphosphate + H(+)</text>
        <dbReference type="Rhea" id="RHEA:29395"/>
        <dbReference type="ChEBI" id="CHEBI:15377"/>
        <dbReference type="ChEBI" id="CHEBI:15378"/>
        <dbReference type="ChEBI" id="CHEBI:33019"/>
        <dbReference type="ChEBI" id="CHEBI:46398"/>
        <dbReference type="ChEBI" id="CHEBI:57865"/>
        <dbReference type="EC" id="3.6.1.9"/>
    </reaction>
</comment>
<comment type="cofactor">
    <cofactor evidence="1">
        <name>a divalent metal cation</name>
        <dbReference type="ChEBI" id="CHEBI:60240"/>
    </cofactor>
</comment>
<comment type="subcellular location">
    <subcellularLocation>
        <location evidence="1">Cytoplasm</location>
    </subcellularLocation>
</comment>
<comment type="similarity">
    <text evidence="1">Belongs to the Maf family. YhdE subfamily.</text>
</comment>
<reference key="1">
    <citation type="journal article" date="2010" name="Genome Biol. Evol.">
        <title>Continuing evolution of Burkholderia mallei through genome reduction and large-scale rearrangements.</title>
        <authorList>
            <person name="Losada L."/>
            <person name="Ronning C.M."/>
            <person name="DeShazer D."/>
            <person name="Woods D."/>
            <person name="Fedorova N."/>
            <person name="Kim H.S."/>
            <person name="Shabalina S.A."/>
            <person name="Pearson T.R."/>
            <person name="Brinkac L."/>
            <person name="Tan P."/>
            <person name="Nandi T."/>
            <person name="Crabtree J."/>
            <person name="Badger J."/>
            <person name="Beckstrom-Sternberg S."/>
            <person name="Saqib M."/>
            <person name="Schutzer S.E."/>
            <person name="Keim P."/>
            <person name="Nierman W.C."/>
        </authorList>
    </citation>
    <scope>NUCLEOTIDE SEQUENCE [LARGE SCALE GENOMIC DNA]</scope>
    <source>
        <strain>1710b</strain>
    </source>
</reference>